<protein>
    <recommendedName>
        <fullName evidence="1">Dihydroorotate dehydrogenase (quinone)</fullName>
        <ecNumber evidence="1">1.3.5.2</ecNumber>
    </recommendedName>
    <alternativeName>
        <fullName evidence="1">DHOdehase</fullName>
        <shortName evidence="1">DHOD</shortName>
        <shortName evidence="1">DHODase</shortName>
    </alternativeName>
    <alternativeName>
        <fullName evidence="1">Dihydroorotate oxidase</fullName>
    </alternativeName>
</protein>
<keyword id="KW-1003">Cell membrane</keyword>
<keyword id="KW-0285">Flavoprotein</keyword>
<keyword id="KW-0288">FMN</keyword>
<keyword id="KW-0472">Membrane</keyword>
<keyword id="KW-0560">Oxidoreductase</keyword>
<keyword id="KW-0665">Pyrimidine biosynthesis</keyword>
<gene>
    <name evidence="1" type="primary">pyrD</name>
    <name type="ordered locus">Ava_1222</name>
</gene>
<accession>Q3MDU0</accession>
<evidence type="ECO:0000255" key="1">
    <source>
        <dbReference type="HAMAP-Rule" id="MF_00225"/>
    </source>
</evidence>
<reference key="1">
    <citation type="journal article" date="2014" name="Stand. Genomic Sci.">
        <title>Complete genome sequence of Anabaena variabilis ATCC 29413.</title>
        <authorList>
            <person name="Thiel T."/>
            <person name="Pratte B.S."/>
            <person name="Zhong J."/>
            <person name="Goodwin L."/>
            <person name="Copeland A."/>
            <person name="Lucas S."/>
            <person name="Han C."/>
            <person name="Pitluck S."/>
            <person name="Land M.L."/>
            <person name="Kyrpides N.C."/>
            <person name="Woyke T."/>
        </authorList>
    </citation>
    <scope>NUCLEOTIDE SEQUENCE [LARGE SCALE GENOMIC DNA]</scope>
    <source>
        <strain>ATCC 29413 / PCC 7937</strain>
    </source>
</reference>
<dbReference type="EC" id="1.3.5.2" evidence="1"/>
<dbReference type="EMBL" id="CP000117">
    <property type="protein sequence ID" value="ABA20846.1"/>
    <property type="molecule type" value="Genomic_DNA"/>
</dbReference>
<dbReference type="SMR" id="Q3MDU0"/>
<dbReference type="STRING" id="240292.Ava_1222"/>
<dbReference type="KEGG" id="ava:Ava_1222"/>
<dbReference type="eggNOG" id="COG0167">
    <property type="taxonomic scope" value="Bacteria"/>
</dbReference>
<dbReference type="HOGENOM" id="CLU_013640_2_0_3"/>
<dbReference type="UniPathway" id="UPA00070">
    <property type="reaction ID" value="UER00946"/>
</dbReference>
<dbReference type="Proteomes" id="UP000002533">
    <property type="component" value="Chromosome"/>
</dbReference>
<dbReference type="GO" id="GO:0005737">
    <property type="term" value="C:cytoplasm"/>
    <property type="evidence" value="ECO:0007669"/>
    <property type="project" value="InterPro"/>
</dbReference>
<dbReference type="GO" id="GO:0005886">
    <property type="term" value="C:plasma membrane"/>
    <property type="evidence" value="ECO:0007669"/>
    <property type="project" value="UniProtKB-SubCell"/>
</dbReference>
<dbReference type="GO" id="GO:0106430">
    <property type="term" value="F:dihydroorotate dehydrogenase (quinone) activity"/>
    <property type="evidence" value="ECO:0007669"/>
    <property type="project" value="UniProtKB-EC"/>
</dbReference>
<dbReference type="GO" id="GO:0006207">
    <property type="term" value="P:'de novo' pyrimidine nucleobase biosynthetic process"/>
    <property type="evidence" value="ECO:0007669"/>
    <property type="project" value="InterPro"/>
</dbReference>
<dbReference type="GO" id="GO:0044205">
    <property type="term" value="P:'de novo' UMP biosynthetic process"/>
    <property type="evidence" value="ECO:0007669"/>
    <property type="project" value="UniProtKB-UniRule"/>
</dbReference>
<dbReference type="CDD" id="cd04738">
    <property type="entry name" value="DHOD_2_like"/>
    <property type="match status" value="1"/>
</dbReference>
<dbReference type="Gene3D" id="3.20.20.70">
    <property type="entry name" value="Aldolase class I"/>
    <property type="match status" value="1"/>
</dbReference>
<dbReference type="HAMAP" id="MF_00225">
    <property type="entry name" value="DHO_dh_type2"/>
    <property type="match status" value="1"/>
</dbReference>
<dbReference type="InterPro" id="IPR013785">
    <property type="entry name" value="Aldolase_TIM"/>
</dbReference>
<dbReference type="InterPro" id="IPR050074">
    <property type="entry name" value="DHO_dehydrogenase"/>
</dbReference>
<dbReference type="InterPro" id="IPR005719">
    <property type="entry name" value="Dihydroorotate_DH_2"/>
</dbReference>
<dbReference type="InterPro" id="IPR005720">
    <property type="entry name" value="Dihydroorotate_DH_cat"/>
</dbReference>
<dbReference type="InterPro" id="IPR001295">
    <property type="entry name" value="Dihydroorotate_DH_CS"/>
</dbReference>
<dbReference type="NCBIfam" id="NF003651">
    <property type="entry name" value="PRK05286.2-4"/>
    <property type="match status" value="1"/>
</dbReference>
<dbReference type="NCBIfam" id="NF003652">
    <property type="entry name" value="PRK05286.2-5"/>
    <property type="match status" value="1"/>
</dbReference>
<dbReference type="NCBIfam" id="TIGR01036">
    <property type="entry name" value="pyrD_sub2"/>
    <property type="match status" value="1"/>
</dbReference>
<dbReference type="PANTHER" id="PTHR48109:SF4">
    <property type="entry name" value="DIHYDROOROTATE DEHYDROGENASE (QUINONE), MITOCHONDRIAL"/>
    <property type="match status" value="1"/>
</dbReference>
<dbReference type="PANTHER" id="PTHR48109">
    <property type="entry name" value="DIHYDROOROTATE DEHYDROGENASE (QUINONE), MITOCHONDRIAL-RELATED"/>
    <property type="match status" value="1"/>
</dbReference>
<dbReference type="Pfam" id="PF01180">
    <property type="entry name" value="DHO_dh"/>
    <property type="match status" value="1"/>
</dbReference>
<dbReference type="SUPFAM" id="SSF51395">
    <property type="entry name" value="FMN-linked oxidoreductases"/>
    <property type="match status" value="1"/>
</dbReference>
<dbReference type="PROSITE" id="PS00911">
    <property type="entry name" value="DHODEHASE_1"/>
    <property type="match status" value="1"/>
</dbReference>
<dbReference type="PROSITE" id="PS00912">
    <property type="entry name" value="DHODEHASE_2"/>
    <property type="match status" value="1"/>
</dbReference>
<proteinExistence type="inferred from homology"/>
<sequence>MDIYKFAVRPLLFDLVKADPEWLHQQTMRSLSWLSHTSDRTSTKWVQNILQKSLCIEDSRLEQNLFGLRFPNPVGLAAGFDKDGVAARIWSSLGFGFAELGTVTFVAQPGNPPPRLFRLPLDQAALNRMGFNNHGAAVMATRLADEKGLFSIPIGINLGKSKVTPLEAAAEDYLNSFRLLKELGDYFVVNVSSPNTPGLRSLQDASMLSSILDVLQKENQSHKPIFVKIAPDLEWEAIADIIGLAKTYQLAGIIATNTTIRRDGLKTQVIEQTGKAPQEEAGGISGAPVRDRSTEIIRFIWQQTQGEIPIIGVGGIFTPEDAWAKITAGASLIQVYTGWIYQGPMMVSQILTGLLAKLEEHELNSISEAIGLEFKS</sequence>
<comment type="function">
    <text evidence="1">Catalyzes the conversion of dihydroorotate to orotate with quinone as electron acceptor.</text>
</comment>
<comment type="catalytic activity">
    <reaction evidence="1">
        <text>(S)-dihydroorotate + a quinone = orotate + a quinol</text>
        <dbReference type="Rhea" id="RHEA:30187"/>
        <dbReference type="ChEBI" id="CHEBI:24646"/>
        <dbReference type="ChEBI" id="CHEBI:30839"/>
        <dbReference type="ChEBI" id="CHEBI:30864"/>
        <dbReference type="ChEBI" id="CHEBI:132124"/>
        <dbReference type="EC" id="1.3.5.2"/>
    </reaction>
</comment>
<comment type="cofactor">
    <cofactor evidence="1">
        <name>FMN</name>
        <dbReference type="ChEBI" id="CHEBI:58210"/>
    </cofactor>
    <text evidence="1">Binds 1 FMN per subunit.</text>
</comment>
<comment type="pathway">
    <text evidence="1">Pyrimidine metabolism; UMP biosynthesis via de novo pathway; orotate from (S)-dihydroorotate (quinone route): step 1/1.</text>
</comment>
<comment type="subunit">
    <text evidence="1">Monomer.</text>
</comment>
<comment type="subcellular location">
    <subcellularLocation>
        <location evidence="1">Cell membrane</location>
        <topology evidence="1">Peripheral membrane protein</topology>
    </subcellularLocation>
</comment>
<comment type="similarity">
    <text evidence="1">Belongs to the dihydroorotate dehydrogenase family. Type 2 subfamily.</text>
</comment>
<feature type="chain" id="PRO_1000024151" description="Dihydroorotate dehydrogenase (quinone)">
    <location>
        <begin position="1"/>
        <end position="376"/>
    </location>
</feature>
<feature type="active site" description="Nucleophile" evidence="1">
    <location>
        <position position="193"/>
    </location>
</feature>
<feature type="binding site" evidence="1">
    <location>
        <begin position="78"/>
        <end position="82"/>
    </location>
    <ligand>
        <name>FMN</name>
        <dbReference type="ChEBI" id="CHEBI:58210"/>
    </ligand>
</feature>
<feature type="binding site" evidence="1">
    <location>
        <position position="82"/>
    </location>
    <ligand>
        <name>substrate</name>
    </ligand>
</feature>
<feature type="binding site" evidence="1">
    <location>
        <position position="102"/>
    </location>
    <ligand>
        <name>FMN</name>
        <dbReference type="ChEBI" id="CHEBI:58210"/>
    </ligand>
</feature>
<feature type="binding site" evidence="1">
    <location>
        <begin position="127"/>
        <end position="131"/>
    </location>
    <ligand>
        <name>substrate</name>
    </ligand>
</feature>
<feature type="binding site" evidence="1">
    <location>
        <position position="157"/>
    </location>
    <ligand>
        <name>FMN</name>
        <dbReference type="ChEBI" id="CHEBI:58210"/>
    </ligand>
</feature>
<feature type="binding site" evidence="1">
    <location>
        <position position="190"/>
    </location>
    <ligand>
        <name>FMN</name>
        <dbReference type="ChEBI" id="CHEBI:58210"/>
    </ligand>
</feature>
<feature type="binding site" evidence="1">
    <location>
        <position position="190"/>
    </location>
    <ligand>
        <name>substrate</name>
    </ligand>
</feature>
<feature type="binding site" evidence="1">
    <location>
        <position position="195"/>
    </location>
    <ligand>
        <name>substrate</name>
    </ligand>
</feature>
<feature type="binding site" evidence="1">
    <location>
        <position position="228"/>
    </location>
    <ligand>
        <name>FMN</name>
        <dbReference type="ChEBI" id="CHEBI:58210"/>
    </ligand>
</feature>
<feature type="binding site" evidence="1">
    <location>
        <position position="256"/>
    </location>
    <ligand>
        <name>FMN</name>
        <dbReference type="ChEBI" id="CHEBI:58210"/>
    </ligand>
</feature>
<feature type="binding site" evidence="1">
    <location>
        <begin position="257"/>
        <end position="258"/>
    </location>
    <ligand>
        <name>substrate</name>
    </ligand>
</feature>
<feature type="binding site" evidence="1">
    <location>
        <position position="286"/>
    </location>
    <ligand>
        <name>FMN</name>
        <dbReference type="ChEBI" id="CHEBI:58210"/>
    </ligand>
</feature>
<feature type="binding site" evidence="1">
    <location>
        <position position="315"/>
    </location>
    <ligand>
        <name>FMN</name>
        <dbReference type="ChEBI" id="CHEBI:58210"/>
    </ligand>
</feature>
<feature type="binding site" evidence="1">
    <location>
        <begin position="336"/>
        <end position="337"/>
    </location>
    <ligand>
        <name>FMN</name>
        <dbReference type="ChEBI" id="CHEBI:58210"/>
    </ligand>
</feature>
<organism>
    <name type="scientific">Trichormus variabilis (strain ATCC 29413 / PCC 7937)</name>
    <name type="common">Anabaena variabilis</name>
    <dbReference type="NCBI Taxonomy" id="240292"/>
    <lineage>
        <taxon>Bacteria</taxon>
        <taxon>Bacillati</taxon>
        <taxon>Cyanobacteriota</taxon>
        <taxon>Cyanophyceae</taxon>
        <taxon>Nostocales</taxon>
        <taxon>Nostocaceae</taxon>
        <taxon>Trichormus</taxon>
    </lineage>
</organism>
<name>PYRD_TRIV2</name>